<evidence type="ECO:0000255" key="1">
    <source>
        <dbReference type="HAMAP-Rule" id="MF_00134"/>
    </source>
</evidence>
<gene>
    <name evidence="1" type="primary">trpC</name>
    <name type="ordered locus">spr1634</name>
</gene>
<comment type="catalytic activity">
    <reaction evidence="1">
        <text>1-(2-carboxyphenylamino)-1-deoxy-D-ribulose 5-phosphate + H(+) = (1S,2R)-1-C-(indol-3-yl)glycerol 3-phosphate + CO2 + H2O</text>
        <dbReference type="Rhea" id="RHEA:23476"/>
        <dbReference type="ChEBI" id="CHEBI:15377"/>
        <dbReference type="ChEBI" id="CHEBI:15378"/>
        <dbReference type="ChEBI" id="CHEBI:16526"/>
        <dbReference type="ChEBI" id="CHEBI:58613"/>
        <dbReference type="ChEBI" id="CHEBI:58866"/>
        <dbReference type="EC" id="4.1.1.48"/>
    </reaction>
</comment>
<comment type="pathway">
    <text evidence="1">Amino-acid biosynthesis; L-tryptophan biosynthesis; L-tryptophan from chorismate: step 4/5.</text>
</comment>
<comment type="similarity">
    <text evidence="1">Belongs to the TrpC family.</text>
</comment>
<protein>
    <recommendedName>
        <fullName evidence="1">Indole-3-glycerol phosphate synthase</fullName>
        <shortName evidence="1">IGPS</shortName>
        <ecNumber evidence="1">4.1.1.48</ecNumber>
    </recommendedName>
</protein>
<dbReference type="EC" id="4.1.1.48" evidence="1"/>
<dbReference type="EMBL" id="AE007317">
    <property type="protein sequence ID" value="AAL00437.1"/>
    <property type="molecule type" value="Genomic_DNA"/>
</dbReference>
<dbReference type="PIR" id="H98075">
    <property type="entry name" value="H98075"/>
</dbReference>
<dbReference type="RefSeq" id="NP_359226.1">
    <property type="nucleotide sequence ID" value="NC_003098.1"/>
</dbReference>
<dbReference type="RefSeq" id="WP_000076536.1">
    <property type="nucleotide sequence ID" value="NC_003098.1"/>
</dbReference>
<dbReference type="SMR" id="Q8DNM6"/>
<dbReference type="STRING" id="171101.spr1634"/>
<dbReference type="KEGG" id="spr:spr1634"/>
<dbReference type="PATRIC" id="fig|171101.6.peg.1763"/>
<dbReference type="eggNOG" id="COG0134">
    <property type="taxonomic scope" value="Bacteria"/>
</dbReference>
<dbReference type="HOGENOM" id="CLU_034247_2_1_9"/>
<dbReference type="UniPathway" id="UPA00035">
    <property type="reaction ID" value="UER00043"/>
</dbReference>
<dbReference type="Proteomes" id="UP000000586">
    <property type="component" value="Chromosome"/>
</dbReference>
<dbReference type="GO" id="GO:0004425">
    <property type="term" value="F:indole-3-glycerol-phosphate synthase activity"/>
    <property type="evidence" value="ECO:0000318"/>
    <property type="project" value="GO_Central"/>
</dbReference>
<dbReference type="GO" id="GO:0004640">
    <property type="term" value="F:phosphoribosylanthranilate isomerase activity"/>
    <property type="evidence" value="ECO:0000318"/>
    <property type="project" value="GO_Central"/>
</dbReference>
<dbReference type="GO" id="GO:0000162">
    <property type="term" value="P:L-tryptophan biosynthetic process"/>
    <property type="evidence" value="ECO:0000318"/>
    <property type="project" value="GO_Central"/>
</dbReference>
<dbReference type="CDD" id="cd00331">
    <property type="entry name" value="IGPS"/>
    <property type="match status" value="1"/>
</dbReference>
<dbReference type="FunFam" id="3.20.20.70:FF:000024">
    <property type="entry name" value="Indole-3-glycerol phosphate synthase"/>
    <property type="match status" value="1"/>
</dbReference>
<dbReference type="Gene3D" id="3.20.20.70">
    <property type="entry name" value="Aldolase class I"/>
    <property type="match status" value="1"/>
</dbReference>
<dbReference type="HAMAP" id="MF_00134_B">
    <property type="entry name" value="IGPS_B"/>
    <property type="match status" value="1"/>
</dbReference>
<dbReference type="InterPro" id="IPR013785">
    <property type="entry name" value="Aldolase_TIM"/>
</dbReference>
<dbReference type="InterPro" id="IPR045186">
    <property type="entry name" value="Indole-3-glycerol_P_synth"/>
</dbReference>
<dbReference type="InterPro" id="IPR013798">
    <property type="entry name" value="Indole-3-glycerol_P_synth_dom"/>
</dbReference>
<dbReference type="InterPro" id="IPR001468">
    <property type="entry name" value="Indole-3-GlycerolPSynthase_CS"/>
</dbReference>
<dbReference type="InterPro" id="IPR011060">
    <property type="entry name" value="RibuloseP-bd_barrel"/>
</dbReference>
<dbReference type="NCBIfam" id="NF001371">
    <property type="entry name" value="PRK00278.1-3"/>
    <property type="match status" value="1"/>
</dbReference>
<dbReference type="NCBIfam" id="NF001377">
    <property type="entry name" value="PRK00278.2-4"/>
    <property type="match status" value="1"/>
</dbReference>
<dbReference type="PANTHER" id="PTHR22854:SF2">
    <property type="entry name" value="INDOLE-3-GLYCEROL-PHOSPHATE SYNTHASE"/>
    <property type="match status" value="1"/>
</dbReference>
<dbReference type="PANTHER" id="PTHR22854">
    <property type="entry name" value="TRYPTOPHAN BIOSYNTHESIS PROTEIN"/>
    <property type="match status" value="1"/>
</dbReference>
<dbReference type="Pfam" id="PF00218">
    <property type="entry name" value="IGPS"/>
    <property type="match status" value="1"/>
</dbReference>
<dbReference type="SUPFAM" id="SSF51366">
    <property type="entry name" value="Ribulose-phoshate binding barrel"/>
    <property type="match status" value="1"/>
</dbReference>
<dbReference type="PROSITE" id="PS00614">
    <property type="entry name" value="IGPS"/>
    <property type="match status" value="1"/>
</dbReference>
<accession>Q8DNM6</accession>
<keyword id="KW-0028">Amino-acid biosynthesis</keyword>
<keyword id="KW-0057">Aromatic amino acid biosynthesis</keyword>
<keyword id="KW-0210">Decarboxylase</keyword>
<keyword id="KW-0456">Lyase</keyword>
<keyword id="KW-1185">Reference proteome</keyword>
<keyword id="KW-0822">Tryptophan biosynthesis</keyword>
<proteinExistence type="inferred from homology"/>
<sequence>MSQEFLARILEQKAREVEQMKLEQIQPLRQTYRLAEFLKNHQDCLQVIAEVKKASPSLGDINLDVDIVQQAQTYEENGAVMISVLTDEVFFKGHLDYLREISSQVEIPTLNKDFIIDEKQIIRARNAGATVILLIVAALSEERLKELYDYATELGLEVLVETHNLAELEVAHRLGAEIIGVNNRNLTTFEVDLQTSVDLAPYFEEGRYYISESAIFTGQDAERLAPYFNGILVGTALMQAENVVQRIKELQIDKG</sequence>
<reference key="1">
    <citation type="journal article" date="2001" name="J. Bacteriol.">
        <title>Genome of the bacterium Streptococcus pneumoniae strain R6.</title>
        <authorList>
            <person name="Hoskins J."/>
            <person name="Alborn W.E. Jr."/>
            <person name="Arnold J."/>
            <person name="Blaszczak L.C."/>
            <person name="Burgett S."/>
            <person name="DeHoff B.S."/>
            <person name="Estrem S.T."/>
            <person name="Fritz L."/>
            <person name="Fu D.-J."/>
            <person name="Fuller W."/>
            <person name="Geringer C."/>
            <person name="Gilmour R."/>
            <person name="Glass J.S."/>
            <person name="Khoja H."/>
            <person name="Kraft A.R."/>
            <person name="Lagace R.E."/>
            <person name="LeBlanc D.J."/>
            <person name="Lee L.N."/>
            <person name="Lefkowitz E.J."/>
            <person name="Lu J."/>
            <person name="Matsushima P."/>
            <person name="McAhren S.M."/>
            <person name="McHenney M."/>
            <person name="McLeaster K."/>
            <person name="Mundy C.W."/>
            <person name="Nicas T.I."/>
            <person name="Norris F.H."/>
            <person name="O'Gara M."/>
            <person name="Peery R.B."/>
            <person name="Robertson G.T."/>
            <person name="Rockey P."/>
            <person name="Sun P.-M."/>
            <person name="Winkler M.E."/>
            <person name="Yang Y."/>
            <person name="Young-Bellido M."/>
            <person name="Zhao G."/>
            <person name="Zook C.A."/>
            <person name="Baltz R.H."/>
            <person name="Jaskunas S.R."/>
            <person name="Rosteck P.R. Jr."/>
            <person name="Skatrud P.L."/>
            <person name="Glass J.I."/>
        </authorList>
    </citation>
    <scope>NUCLEOTIDE SEQUENCE [LARGE SCALE GENOMIC DNA]</scope>
    <source>
        <strain>ATCC BAA-255 / R6</strain>
    </source>
</reference>
<feature type="chain" id="PRO_0000154263" description="Indole-3-glycerol phosphate synthase">
    <location>
        <begin position="1"/>
        <end position="255"/>
    </location>
</feature>
<name>TRPC_STRR6</name>
<organism>
    <name type="scientific">Streptococcus pneumoniae (strain ATCC BAA-255 / R6)</name>
    <dbReference type="NCBI Taxonomy" id="171101"/>
    <lineage>
        <taxon>Bacteria</taxon>
        <taxon>Bacillati</taxon>
        <taxon>Bacillota</taxon>
        <taxon>Bacilli</taxon>
        <taxon>Lactobacillales</taxon>
        <taxon>Streptococcaceae</taxon>
        <taxon>Streptococcus</taxon>
    </lineage>
</organism>